<organism>
    <name type="scientific">Methanosarcina barkeri (strain Fusaro / DSM 804)</name>
    <dbReference type="NCBI Taxonomy" id="269797"/>
    <lineage>
        <taxon>Archaea</taxon>
        <taxon>Methanobacteriati</taxon>
        <taxon>Methanobacteriota</taxon>
        <taxon>Stenosarchaea group</taxon>
        <taxon>Methanomicrobia</taxon>
        <taxon>Methanosarcinales</taxon>
        <taxon>Methanosarcinaceae</taxon>
        <taxon>Methanosarcina</taxon>
    </lineage>
</organism>
<dbReference type="EMBL" id="CP000099">
    <property type="protein sequence ID" value="AAZ69231.1"/>
    <property type="molecule type" value="Genomic_DNA"/>
</dbReference>
<dbReference type="STRING" id="269797.Mbar_A0247"/>
<dbReference type="PaxDb" id="269797-Mbar_A0247"/>
<dbReference type="KEGG" id="mba:Mbar_A0247"/>
<dbReference type="eggNOG" id="arCOG04898">
    <property type="taxonomic scope" value="Archaea"/>
</dbReference>
<dbReference type="HOGENOM" id="CLU_096410_3_0_2"/>
<dbReference type="OrthoDB" id="53356at2157"/>
<dbReference type="GO" id="GO:0005886">
    <property type="term" value="C:plasma membrane"/>
    <property type="evidence" value="ECO:0007669"/>
    <property type="project" value="UniProtKB-SubCell"/>
</dbReference>
<dbReference type="GO" id="GO:0005384">
    <property type="term" value="F:manganese ion transmembrane transporter activity"/>
    <property type="evidence" value="ECO:0007669"/>
    <property type="project" value="UniProtKB-UniRule"/>
</dbReference>
<dbReference type="HAMAP" id="MF_01521">
    <property type="entry name" value="MntP_pump"/>
    <property type="match status" value="1"/>
</dbReference>
<dbReference type="InterPro" id="IPR003810">
    <property type="entry name" value="Mntp/YtaF"/>
</dbReference>
<dbReference type="InterPro" id="IPR022929">
    <property type="entry name" value="Put_MntP"/>
</dbReference>
<dbReference type="PANTHER" id="PTHR35529">
    <property type="entry name" value="MANGANESE EFFLUX PUMP MNTP-RELATED"/>
    <property type="match status" value="1"/>
</dbReference>
<dbReference type="PANTHER" id="PTHR35529:SF1">
    <property type="entry name" value="MANGANESE EFFLUX PUMP MNTP-RELATED"/>
    <property type="match status" value="1"/>
</dbReference>
<dbReference type="Pfam" id="PF02659">
    <property type="entry name" value="Mntp"/>
    <property type="match status" value="1"/>
</dbReference>
<proteinExistence type="inferred from homology"/>
<evidence type="ECO:0000255" key="1">
    <source>
        <dbReference type="HAMAP-Rule" id="MF_01521"/>
    </source>
</evidence>
<sequence>MSFLTNFLLGLGLSMDAFAVSMSSSTTIRPFHQKDALKLAVFFGGFQAFMPVLGWLGGSAVSGFVSNYASWIAFGLLTFIGGKMIYEALYGDPDGKINSLNYSVLLMLAIATSIDALAVGISFAFLNTPILEPVIIIGCVTFVMSFCGAVLGHRIGHFFEHEVEIIGGLILIGIGGKILAEHLLWI</sequence>
<keyword id="KW-1003">Cell membrane</keyword>
<keyword id="KW-0406">Ion transport</keyword>
<keyword id="KW-0464">Manganese</keyword>
<keyword id="KW-0472">Membrane</keyword>
<keyword id="KW-0812">Transmembrane</keyword>
<keyword id="KW-1133">Transmembrane helix</keyword>
<keyword id="KW-0813">Transport</keyword>
<reference key="1">
    <citation type="journal article" date="2006" name="J. Bacteriol.">
        <title>The Methanosarcina barkeri genome: comparative analysis with Methanosarcina acetivorans and Methanosarcina mazei reveals extensive rearrangement within methanosarcinal genomes.</title>
        <authorList>
            <person name="Maeder D.L."/>
            <person name="Anderson I."/>
            <person name="Brettin T.S."/>
            <person name="Bruce D.C."/>
            <person name="Gilna P."/>
            <person name="Han C.S."/>
            <person name="Lapidus A."/>
            <person name="Metcalf W.W."/>
            <person name="Saunders E."/>
            <person name="Tapia R."/>
            <person name="Sowers K.R."/>
        </authorList>
    </citation>
    <scope>NUCLEOTIDE SEQUENCE [LARGE SCALE GENOMIC DNA]</scope>
    <source>
        <strain>Fusaro / DSM 804</strain>
    </source>
</reference>
<protein>
    <recommendedName>
        <fullName evidence="1">Putative manganese efflux pump MntP</fullName>
    </recommendedName>
</protein>
<feature type="chain" id="PRO_0000296948" description="Putative manganese efflux pump MntP">
    <location>
        <begin position="1"/>
        <end position="186"/>
    </location>
</feature>
<feature type="transmembrane region" description="Helical" evidence="1">
    <location>
        <begin position="1"/>
        <end position="21"/>
    </location>
</feature>
<feature type="transmembrane region" description="Helical" evidence="1">
    <location>
        <begin position="41"/>
        <end position="61"/>
    </location>
</feature>
<feature type="transmembrane region" description="Helical" evidence="1">
    <location>
        <begin position="71"/>
        <end position="91"/>
    </location>
</feature>
<feature type="transmembrane region" description="Helical" evidence="1">
    <location>
        <begin position="105"/>
        <end position="125"/>
    </location>
</feature>
<feature type="transmembrane region" description="Helical" evidence="1">
    <location>
        <begin position="130"/>
        <end position="150"/>
    </location>
</feature>
<feature type="transmembrane region" description="Helical" evidence="1">
    <location>
        <begin position="165"/>
        <end position="185"/>
    </location>
</feature>
<gene>
    <name evidence="1" type="primary">mntP</name>
    <name type="ordered locus">Mbar_A0247</name>
</gene>
<name>MNTP_METBF</name>
<comment type="function">
    <text evidence="1">Probably functions as a manganese efflux pump.</text>
</comment>
<comment type="subcellular location">
    <subcellularLocation>
        <location evidence="1">Cell membrane</location>
        <topology evidence="1">Multi-pass membrane protein</topology>
    </subcellularLocation>
</comment>
<comment type="similarity">
    <text evidence="1">Belongs to the MntP (TC 9.B.29) family.</text>
</comment>
<accession>Q46FW1</accession>